<reference key="1">
    <citation type="journal article" date="2004" name="J. Bacteriol.">
        <title>Complete genome sequence of the genetically tractable hydrogenotrophic methanogen Methanococcus maripaludis.</title>
        <authorList>
            <person name="Hendrickson E.L."/>
            <person name="Kaul R."/>
            <person name="Zhou Y."/>
            <person name="Bovee D."/>
            <person name="Chapman P."/>
            <person name="Chung J."/>
            <person name="Conway de Macario E."/>
            <person name="Dodsworth J.A."/>
            <person name="Gillett W."/>
            <person name="Graham D.E."/>
            <person name="Hackett M."/>
            <person name="Haydock A.K."/>
            <person name="Kang A."/>
            <person name="Land M.L."/>
            <person name="Levy R."/>
            <person name="Lie T.J."/>
            <person name="Major T.A."/>
            <person name="Moore B.C."/>
            <person name="Porat I."/>
            <person name="Palmeiri A."/>
            <person name="Rouse G."/>
            <person name="Saenphimmachak C."/>
            <person name="Soell D."/>
            <person name="Van Dien S."/>
            <person name="Wang T."/>
            <person name="Whitman W.B."/>
            <person name="Xia Q."/>
            <person name="Zhang Y."/>
            <person name="Larimer F.W."/>
            <person name="Olson M.V."/>
            <person name="Leigh J.A."/>
        </authorList>
    </citation>
    <scope>NUCLEOTIDE SEQUENCE [LARGE SCALE GENOMIC DNA]</scope>
    <source>
        <strain>DSM 14266 / JCM 13030 / NBRC 101832 / S2 / LL</strain>
    </source>
</reference>
<gene>
    <name evidence="1" type="primary">atpE</name>
    <name type="ordered locus">MMP1041</name>
</gene>
<evidence type="ECO:0000255" key="1">
    <source>
        <dbReference type="HAMAP-Rule" id="MF_00311"/>
    </source>
</evidence>
<protein>
    <recommendedName>
        <fullName evidence="1">A-type ATP synthase subunit E</fullName>
    </recommendedName>
</protein>
<keyword id="KW-0066">ATP synthesis</keyword>
<keyword id="KW-1003">Cell membrane</keyword>
<keyword id="KW-0375">Hydrogen ion transport</keyword>
<keyword id="KW-0406">Ion transport</keyword>
<keyword id="KW-0472">Membrane</keyword>
<keyword id="KW-1185">Reference proteome</keyword>
<keyword id="KW-0813">Transport</keyword>
<organism>
    <name type="scientific">Methanococcus maripaludis (strain DSM 14266 / JCM 13030 / NBRC 101832 / S2 / LL)</name>
    <dbReference type="NCBI Taxonomy" id="267377"/>
    <lineage>
        <taxon>Archaea</taxon>
        <taxon>Methanobacteriati</taxon>
        <taxon>Methanobacteriota</taxon>
        <taxon>Methanomada group</taxon>
        <taxon>Methanococci</taxon>
        <taxon>Methanococcales</taxon>
        <taxon>Methanococcaceae</taxon>
        <taxon>Methanococcus</taxon>
    </lineage>
</organism>
<dbReference type="EMBL" id="BX950229">
    <property type="protein sequence ID" value="CAF30597.1"/>
    <property type="molecule type" value="Genomic_DNA"/>
</dbReference>
<dbReference type="RefSeq" id="WP_011170985.1">
    <property type="nucleotide sequence ID" value="NC_005791.1"/>
</dbReference>
<dbReference type="SMR" id="Q6LYF0"/>
<dbReference type="STRING" id="267377.MMP1041"/>
<dbReference type="EnsemblBacteria" id="CAF30597">
    <property type="protein sequence ID" value="CAF30597"/>
    <property type="gene ID" value="MMP1041"/>
</dbReference>
<dbReference type="GeneID" id="2761185"/>
<dbReference type="KEGG" id="mmp:MMP1041"/>
<dbReference type="PATRIC" id="fig|267377.15.peg.1073"/>
<dbReference type="eggNOG" id="arCOG00869">
    <property type="taxonomic scope" value="Archaea"/>
</dbReference>
<dbReference type="HOGENOM" id="CLU_105846_1_0_2"/>
<dbReference type="OrthoDB" id="4691at2157"/>
<dbReference type="Proteomes" id="UP000000590">
    <property type="component" value="Chromosome"/>
</dbReference>
<dbReference type="GO" id="GO:0005886">
    <property type="term" value="C:plasma membrane"/>
    <property type="evidence" value="ECO:0007669"/>
    <property type="project" value="UniProtKB-SubCell"/>
</dbReference>
<dbReference type="GO" id="GO:0033178">
    <property type="term" value="C:proton-transporting two-sector ATPase complex, catalytic domain"/>
    <property type="evidence" value="ECO:0007669"/>
    <property type="project" value="InterPro"/>
</dbReference>
<dbReference type="GO" id="GO:0005524">
    <property type="term" value="F:ATP binding"/>
    <property type="evidence" value="ECO:0007669"/>
    <property type="project" value="UniProtKB-UniRule"/>
</dbReference>
<dbReference type="GO" id="GO:0046933">
    <property type="term" value="F:proton-transporting ATP synthase activity, rotational mechanism"/>
    <property type="evidence" value="ECO:0007669"/>
    <property type="project" value="UniProtKB-UniRule"/>
</dbReference>
<dbReference type="GO" id="GO:0046961">
    <property type="term" value="F:proton-transporting ATPase activity, rotational mechanism"/>
    <property type="evidence" value="ECO:0007669"/>
    <property type="project" value="InterPro"/>
</dbReference>
<dbReference type="GO" id="GO:0042777">
    <property type="term" value="P:proton motive force-driven plasma membrane ATP synthesis"/>
    <property type="evidence" value="ECO:0007669"/>
    <property type="project" value="UniProtKB-UniRule"/>
</dbReference>
<dbReference type="Gene3D" id="3.30.2320.30">
    <property type="entry name" value="ATP synthase, E subunit, C-terminal"/>
    <property type="match status" value="1"/>
</dbReference>
<dbReference type="Gene3D" id="1.20.5.620">
    <property type="entry name" value="F1F0 ATP synthase subunit B, membrane domain"/>
    <property type="match status" value="1"/>
</dbReference>
<dbReference type="HAMAP" id="MF_00311">
    <property type="entry name" value="ATP_synth_E_arch"/>
    <property type="match status" value="1"/>
</dbReference>
<dbReference type="InterPro" id="IPR038495">
    <property type="entry name" value="ATPase_E_C"/>
</dbReference>
<dbReference type="InterPro" id="IPR002842">
    <property type="entry name" value="ATPase_V1_Esu"/>
</dbReference>
<dbReference type="PANTHER" id="PTHR45715">
    <property type="entry name" value="ATPASE H+-TRANSPORTING V1 SUBUNIT E1A-RELATED"/>
    <property type="match status" value="1"/>
</dbReference>
<dbReference type="Pfam" id="PF01991">
    <property type="entry name" value="vATP-synt_E"/>
    <property type="match status" value="1"/>
</dbReference>
<dbReference type="SUPFAM" id="SSF160527">
    <property type="entry name" value="V-type ATPase subunit E-like"/>
    <property type="match status" value="1"/>
</dbReference>
<sequence length="203" mass="22777">MGAEKITSKIVEDANKNAEKILAEALNEKEAILTEAKEEASKKEQAIAKKGEKDAEMTKNRILAEARLSAKKKLLEEREKTIQLTLEKLEEDLVKLPQKEDYKDILLKLIISGVYSVGGGELELLLNKKDFELIDDSTLWALEKEMEDRLKKVTVLKKGEAKSIIGGCIIKTADQTKVSDNSLEATFERNLDSVRAKIAEMLF</sequence>
<accession>Q6LYF0</accession>
<feature type="chain" id="PRO_1000059416" description="A-type ATP synthase subunit E">
    <location>
        <begin position="1"/>
        <end position="203"/>
    </location>
</feature>
<comment type="function">
    <text evidence="1">Component of the A-type ATP synthase that produces ATP from ADP in the presence of a proton gradient across the membrane.</text>
</comment>
<comment type="subunit">
    <text evidence="1">Has multiple subunits with at least A(3), B(3), C, D, E, F, H, I and proteolipid K(x).</text>
</comment>
<comment type="subcellular location">
    <subcellularLocation>
        <location evidence="1">Cell membrane</location>
        <topology evidence="1">Peripheral membrane protein</topology>
    </subcellularLocation>
</comment>
<comment type="similarity">
    <text evidence="1">Belongs to the V-ATPase E subunit family.</text>
</comment>
<proteinExistence type="inferred from homology"/>
<name>AATE_METMP</name>